<gene>
    <name evidence="1" type="primary">L2</name>
</gene>
<proteinExistence type="inferred from homology"/>
<protein>
    <recommendedName>
        <fullName evidence="1">Minor capsid protein L2</fullName>
    </recommendedName>
</protein>
<reference key="1">
    <citation type="journal article" date="1994" name="Curr. Top. Microbiol. Immunol.">
        <title>Primer-directed sequencing of human papillomavirus types.</title>
        <authorList>
            <person name="Delius H."/>
            <person name="Hofmann B."/>
        </authorList>
    </citation>
    <scope>NUCLEOTIDE SEQUENCE [GENOMIC DNA]</scope>
</reference>
<accession>P36765</accession>
<sequence length="464" mass="49983">MVAHRATRRKRASATQLYKTCKLSGTCPEDVVNKIEQKTWADKILQWGSLFTYFGGLGIGTGTGSGGRAGYVPLGSRPSTIVDVTPARPPIVVESVGPTDPSIVTLVEESSVIESGAGIPNFTGSGGFEITSSSTTTPAVLDITPTSSTVHVSSTHITNPLFIDPPVIEAPQTGEVSGNILISTPTSGIHSYEEIPMQTFAVHGSGTEPISSTPIPGFRRIAAPRLYRKAFQQVKVTDPAFLDRPATLVSADNPLFEGTDTSLAFSPSGVAPDPDFMNIVALHRPAFTTRRGGVRFSRLGRKATIQTRRGTQIGARVHYYYDISPIAQAEEIEMQPLLSANNSFDGLYDIYANIDDEAPGLSSQSVATPSAHLPIKPSTLSFASNTTNVTAPLGNVWETPFYSGPDIVLPTGPSTWPFVPQSPYDVTHDVYIQGSSFALWPVYFFRRRRRKRIPYFFADGDVAA</sequence>
<feature type="chain" id="PRO_0000133622" description="Minor capsid protein L2">
    <location>
        <begin position="1"/>
        <end position="464"/>
    </location>
</feature>
<feature type="short sequence motif" description="Nuclear localization signal" evidence="1">
    <location>
        <begin position="1"/>
        <end position="12"/>
    </location>
</feature>
<feature type="short sequence motif" description="Nuclear localization signal" evidence="1">
    <location>
        <begin position="445"/>
        <end position="453"/>
    </location>
</feature>
<feature type="disulfide bond" evidence="1">
    <location>
        <begin position="21"/>
        <end position="27"/>
    </location>
</feature>
<comment type="function">
    <text evidence="1">Minor protein of the capsid that localizes along the inner surface of the virion, within the central cavities beneath the L1 pentamers. Plays a role in capsid stabilization through interaction with the major capsid protein L1. Once the virion enters the host cell, L2 escorts the genomic DNA into the nucleus by promoting escape from the endosomal compartments and traffic through the host Golgi network. Mechanistically, the C-terminus of L2 possesses a cell-penetrating peptide that protudes from the host endosome, interacts with host cytoplasmic retromer cargo and thereby mediates the capsid delivery to the host trans-Golgi network. Plays a role through its interaction with host dynein in the intracellular microtubule-dependent transport of viral capsid toward the nucleus. Mediates the viral genome import into the nucleus through binding to host importins. Once within the nucleus, L2 localizes viral genomes to host PML bodies in order to activate early gene expression for establishment of infection. Later on, promotes late gene expression by interacting with the viral E2 protein and by inhibiting its transcriptional activation functions. During virion assembly, encapsidates the genome by direct interaction with the viral DNA.</text>
</comment>
<comment type="subunit">
    <text evidence="1">Interacts with major capsid protein L1. Interacts with E2; this interaction inhibits E2 transcriptional activity but not the DNA replication function E2. Interacts with host GADD45GIP1. Interacts with host HSPA8; this interaction is required for L2 nuclear translocation. Interacts with host importins KPNB2 and KPNB3. Forms a complex with importin alpha2-beta1 heterodimers via interaction with the importin alpha2 adapter. Interacts with host DYNLT1; this interaction is essential for virus intracellular transport during entry. Interacts (via C-terminus) with host retromer subunits VPS35 and VPS29.</text>
</comment>
<comment type="subcellular location">
    <subcellularLocation>
        <location evidence="1">Virion</location>
    </subcellularLocation>
    <subcellularLocation>
        <location evidence="1">Host nucleus</location>
    </subcellularLocation>
    <subcellularLocation>
        <location evidence="1">Host early endosome</location>
    </subcellularLocation>
    <subcellularLocation>
        <location evidence="1">Host Golgi apparatus</location>
    </subcellularLocation>
</comment>
<comment type="PTM">
    <text evidence="1">Highly phosphorylated.</text>
</comment>
<comment type="similarity">
    <text evidence="1">Belongs to the papillomaviridae L2 protein family.</text>
</comment>
<name>VL2_HPV56</name>
<evidence type="ECO:0000255" key="1">
    <source>
        <dbReference type="HAMAP-Rule" id="MF_04003"/>
    </source>
</evidence>
<keyword id="KW-0167">Capsid protein</keyword>
<keyword id="KW-1176">Cytoplasmic inwards viral transport</keyword>
<keyword id="KW-1015">Disulfide bond</keyword>
<keyword id="KW-0238">DNA-binding</keyword>
<keyword id="KW-1039">Host endosome</keyword>
<keyword id="KW-1040">Host Golgi apparatus</keyword>
<keyword id="KW-1048">Host nucleus</keyword>
<keyword id="KW-0945">Host-virus interaction</keyword>
<keyword id="KW-0426">Late protein</keyword>
<keyword id="KW-1177">Microtubular inwards viral transport</keyword>
<keyword id="KW-0597">Phosphoprotein</keyword>
<keyword id="KW-1185">Reference proteome</keyword>
<keyword id="KW-1163">Viral penetration into host nucleus</keyword>
<keyword id="KW-0946">Virion</keyword>
<keyword id="KW-1160">Virus entry into host cell</keyword>
<organism>
    <name type="scientific">Human papillomavirus 56</name>
    <dbReference type="NCBI Taxonomy" id="10596"/>
    <lineage>
        <taxon>Viruses</taxon>
        <taxon>Monodnaviria</taxon>
        <taxon>Shotokuvirae</taxon>
        <taxon>Cossaviricota</taxon>
        <taxon>Papovaviricetes</taxon>
        <taxon>Zurhausenvirales</taxon>
        <taxon>Papillomaviridae</taxon>
        <taxon>Firstpapillomavirinae</taxon>
        <taxon>Alphapapillomavirus</taxon>
        <taxon>Alphapapillomavirus 6</taxon>
    </lineage>
</organism>
<dbReference type="EMBL" id="X74483">
    <property type="protein sequence ID" value="CAA52599.1"/>
    <property type="molecule type" value="Genomic_DNA"/>
</dbReference>
<dbReference type="PIR" id="S36582">
    <property type="entry name" value="S36582"/>
</dbReference>
<dbReference type="Proteomes" id="UP000007666">
    <property type="component" value="Segment"/>
</dbReference>
<dbReference type="GO" id="GO:0043657">
    <property type="term" value="C:host cell"/>
    <property type="evidence" value="ECO:0007669"/>
    <property type="project" value="GOC"/>
</dbReference>
<dbReference type="GO" id="GO:0044174">
    <property type="term" value="C:host cell endosome"/>
    <property type="evidence" value="ECO:0007669"/>
    <property type="project" value="UniProtKB-KW"/>
</dbReference>
<dbReference type="GO" id="GO:0044177">
    <property type="term" value="C:host cell Golgi apparatus"/>
    <property type="evidence" value="ECO:0007669"/>
    <property type="project" value="UniProtKB-SubCell"/>
</dbReference>
<dbReference type="GO" id="GO:0042025">
    <property type="term" value="C:host cell nucleus"/>
    <property type="evidence" value="ECO:0007669"/>
    <property type="project" value="UniProtKB-SubCell"/>
</dbReference>
<dbReference type="GO" id="GO:0019028">
    <property type="term" value="C:viral capsid"/>
    <property type="evidence" value="ECO:0007669"/>
    <property type="project" value="UniProtKB-UniRule"/>
</dbReference>
<dbReference type="GO" id="GO:0003677">
    <property type="term" value="F:DNA binding"/>
    <property type="evidence" value="ECO:0007669"/>
    <property type="project" value="UniProtKB-UniRule"/>
</dbReference>
<dbReference type="GO" id="GO:0005198">
    <property type="term" value="F:structural molecule activity"/>
    <property type="evidence" value="ECO:0007669"/>
    <property type="project" value="UniProtKB-UniRule"/>
</dbReference>
<dbReference type="GO" id="GO:0075521">
    <property type="term" value="P:microtubule-dependent intracellular transport of viral material towards nucleus"/>
    <property type="evidence" value="ECO:0007669"/>
    <property type="project" value="UniProtKB-UniRule"/>
</dbReference>
<dbReference type="GO" id="GO:0046718">
    <property type="term" value="P:symbiont entry into host cell"/>
    <property type="evidence" value="ECO:0007669"/>
    <property type="project" value="UniProtKB-KW"/>
</dbReference>
<dbReference type="GO" id="GO:0075732">
    <property type="term" value="P:viral penetration into host nucleus"/>
    <property type="evidence" value="ECO:0007669"/>
    <property type="project" value="UniProtKB-KW"/>
</dbReference>
<dbReference type="HAMAP" id="MF_04003">
    <property type="entry name" value="PPV_L2"/>
    <property type="match status" value="1"/>
</dbReference>
<dbReference type="InterPro" id="IPR000784">
    <property type="entry name" value="Late_L2"/>
</dbReference>
<dbReference type="Pfam" id="PF00513">
    <property type="entry name" value="Late_protein_L2"/>
    <property type="match status" value="1"/>
</dbReference>
<organismHost>
    <name type="scientific">Homo sapiens</name>
    <name type="common">Human</name>
    <dbReference type="NCBI Taxonomy" id="9606"/>
</organismHost>